<evidence type="ECO:0000250" key="1">
    <source>
        <dbReference type="UniProtKB" id="P07314"/>
    </source>
</evidence>
<evidence type="ECO:0000250" key="2">
    <source>
        <dbReference type="UniProtKB" id="P19440"/>
    </source>
</evidence>
<evidence type="ECO:0000255" key="3"/>
<evidence type="ECO:0000256" key="4">
    <source>
        <dbReference type="SAM" id="MobiDB-lite"/>
    </source>
</evidence>
<evidence type="ECO:0000269" key="5">
    <source>
    </source>
</evidence>
<evidence type="ECO:0000269" key="6">
    <source>
    </source>
</evidence>
<evidence type="ECO:0000269" key="7">
    <source ref="2"/>
</evidence>
<evidence type="ECO:0000303" key="8">
    <source>
    </source>
</evidence>
<evidence type="ECO:0000303" key="9">
    <source>
    </source>
</evidence>
<evidence type="ECO:0000305" key="10"/>
<evidence type="ECO:0000312" key="11">
    <source>
        <dbReference type="HGNC" id="HGNC:26891"/>
    </source>
</evidence>
<feature type="chain" id="PRO_0000314954" description="Glutathione hydrolase 6 heavy chain">
    <location>
        <begin position="1"/>
        <end status="unknown"/>
    </location>
</feature>
<feature type="chain" id="PRO_0000314955" description="Glutathione hydrolase 6 light chain">
    <location>
        <begin status="unknown"/>
        <end position="493"/>
    </location>
</feature>
<feature type="topological domain" description="Cytoplasmic" evidence="1">
    <location>
        <begin position="1"/>
        <end position="54"/>
    </location>
</feature>
<feature type="transmembrane region" description="Helical; Signal-anchor for type II membrane protein" evidence="3">
    <location>
        <begin position="55"/>
        <end position="75"/>
    </location>
</feature>
<feature type="topological domain" description="Extracellular" evidence="1">
    <location>
        <begin position="76"/>
        <end position="493"/>
    </location>
</feature>
<feature type="region of interest" description="Disordered" evidence="4">
    <location>
        <begin position="19"/>
        <end position="52"/>
    </location>
</feature>
<feature type="region of interest" description="Disordered" evidence="4">
    <location>
        <begin position="83"/>
        <end position="105"/>
    </location>
</feature>
<feature type="region of interest" description="Disordered" evidence="4">
    <location>
        <begin position="442"/>
        <end position="464"/>
    </location>
</feature>
<feature type="compositionally biased region" description="Acidic residues" evidence="4">
    <location>
        <begin position="20"/>
        <end position="32"/>
    </location>
</feature>
<feature type="compositionally biased region" description="Low complexity" evidence="4">
    <location>
        <begin position="442"/>
        <end position="455"/>
    </location>
</feature>
<feature type="glycosylation site" description="N-linked (GlcNAc...) asparagine" evidence="3">
    <location>
        <position position="161"/>
    </location>
</feature>
<feature type="glycosylation site" description="N-linked (GlcNAc...) asparagine" evidence="3">
    <location>
        <position position="370"/>
    </location>
</feature>
<feature type="splice variant" id="VSP_030451" description="In isoform 2." evidence="8">
    <location>
        <begin position="116"/>
        <end position="147"/>
    </location>
</feature>
<feature type="sequence variant" id="VAR_038138" description="In dbSNP:rs7216284." evidence="5">
    <original>R</original>
    <variation>W</variation>
    <location>
        <position position="40"/>
    </location>
</feature>
<feature type="sequence variant" id="VAR_038139" description="In dbSNP:rs11657054." evidence="5 6 7">
    <original>A</original>
    <variation>V</variation>
    <location>
        <position position="58"/>
    </location>
</feature>
<accession>Q6P531</accession>
<accession>B4DUH4</accession>
<accession>Q8NCM0</accession>
<keyword id="KW-0012">Acyltransferase</keyword>
<keyword id="KW-0025">Alternative splicing</keyword>
<keyword id="KW-0317">Glutathione biosynthesis</keyword>
<keyword id="KW-0325">Glycoprotein</keyword>
<keyword id="KW-0378">Hydrolase</keyword>
<keyword id="KW-0472">Membrane</keyword>
<keyword id="KW-1267">Proteomics identification</keyword>
<keyword id="KW-1185">Reference proteome</keyword>
<keyword id="KW-0735">Signal-anchor</keyword>
<keyword id="KW-0808">Transferase</keyword>
<keyword id="KW-0812">Transmembrane</keyword>
<keyword id="KW-1133">Transmembrane helix</keyword>
<keyword id="KW-0865">Zymogen</keyword>
<dbReference type="EC" id="3.4.19.13" evidence="2"/>
<dbReference type="EC" id="2.3.2.2" evidence="2"/>
<dbReference type="EMBL" id="AK074646">
    <property type="protein sequence ID" value="BAC11110.1"/>
    <property type="molecule type" value="mRNA"/>
</dbReference>
<dbReference type="EMBL" id="AK300648">
    <property type="protein sequence ID" value="BAG62336.1"/>
    <property type="molecule type" value="mRNA"/>
</dbReference>
<dbReference type="EMBL" id="CH471108">
    <property type="protein sequence ID" value="EAW90433.1"/>
    <property type="molecule type" value="Genomic_DNA"/>
</dbReference>
<dbReference type="EMBL" id="BC063111">
    <property type="protein sequence ID" value="AAH63111.1"/>
    <property type="molecule type" value="mRNA"/>
</dbReference>
<dbReference type="CCDS" id="CCDS11047.1">
    <molecule id="Q6P531-2"/>
</dbReference>
<dbReference type="CCDS" id="CCDS45582.1">
    <molecule id="Q6P531-1"/>
</dbReference>
<dbReference type="RefSeq" id="NP_001116362.1">
    <molecule id="Q6P531-1"/>
    <property type="nucleotide sequence ID" value="NM_001122890.3"/>
</dbReference>
<dbReference type="RefSeq" id="NP_001275631.1">
    <property type="nucleotide sequence ID" value="NM_001288702.1"/>
</dbReference>
<dbReference type="RefSeq" id="NP_001275632.1">
    <property type="nucleotide sequence ID" value="NM_001288703.1"/>
</dbReference>
<dbReference type="RefSeq" id="NP_001275633.1">
    <property type="nucleotide sequence ID" value="NM_001288704.1"/>
</dbReference>
<dbReference type="RefSeq" id="NP_699169.2">
    <molecule id="Q6P531-2"/>
    <property type="nucleotide sequence ID" value="NM_153338.4"/>
</dbReference>
<dbReference type="RefSeq" id="XP_047291291.1">
    <molecule id="Q6P531-1"/>
    <property type="nucleotide sequence ID" value="XM_047435335.1"/>
</dbReference>
<dbReference type="RefSeq" id="XP_047291292.1">
    <molecule id="Q6P531-2"/>
    <property type="nucleotide sequence ID" value="XM_047435336.1"/>
</dbReference>
<dbReference type="SMR" id="Q6P531"/>
<dbReference type="BioGRID" id="125906">
    <property type="interactions" value="13"/>
</dbReference>
<dbReference type="FunCoup" id="Q6P531">
    <property type="interactions" value="138"/>
</dbReference>
<dbReference type="IntAct" id="Q6P531">
    <property type="interactions" value="11"/>
</dbReference>
<dbReference type="STRING" id="9606.ENSP00000370962"/>
<dbReference type="MEROPS" id="T03.024"/>
<dbReference type="GlyCosmos" id="Q6P531">
    <property type="glycosylation" value="2 sites, No reported glycans"/>
</dbReference>
<dbReference type="GlyGen" id="Q6P531">
    <property type="glycosylation" value="2 sites"/>
</dbReference>
<dbReference type="iPTMnet" id="Q6P531"/>
<dbReference type="PhosphoSitePlus" id="Q6P531"/>
<dbReference type="BioMuta" id="GGT6"/>
<dbReference type="DMDM" id="166221586"/>
<dbReference type="MassIVE" id="Q6P531"/>
<dbReference type="PaxDb" id="9606-ENSP00000370962"/>
<dbReference type="PeptideAtlas" id="Q6P531"/>
<dbReference type="ProteomicsDB" id="66987">
    <molecule id="Q6P531-1"/>
</dbReference>
<dbReference type="ProteomicsDB" id="66988">
    <molecule id="Q6P531-2"/>
</dbReference>
<dbReference type="Antibodypedia" id="11242">
    <property type="antibodies" value="119 antibodies from 16 providers"/>
</dbReference>
<dbReference type="DNASU" id="124975"/>
<dbReference type="Ensembl" id="ENST00000301395.7">
    <molecule id="Q6P531-2"/>
    <property type="protein sequence ID" value="ENSP00000301395.3"/>
    <property type="gene ID" value="ENSG00000167741.11"/>
</dbReference>
<dbReference type="Ensembl" id="ENST00000574154.5">
    <molecule id="Q6P531-1"/>
    <property type="protein sequence ID" value="ENSP00000458307.1"/>
    <property type="gene ID" value="ENSG00000167741.11"/>
</dbReference>
<dbReference type="GeneID" id="124975"/>
<dbReference type="KEGG" id="hsa:124975"/>
<dbReference type="UCSC" id="uc002fyc.6">
    <molecule id="Q6P531-1"/>
    <property type="organism name" value="human"/>
</dbReference>
<dbReference type="AGR" id="HGNC:26891"/>
<dbReference type="CTD" id="124975"/>
<dbReference type="DisGeNET" id="124975"/>
<dbReference type="GeneCards" id="GGT6"/>
<dbReference type="HGNC" id="HGNC:26891">
    <property type="gene designation" value="GGT6"/>
</dbReference>
<dbReference type="HPA" id="ENSG00000167741">
    <property type="expression patterns" value="Tissue enhanced (esophagus, intestine, salivary gland, skin)"/>
</dbReference>
<dbReference type="MIM" id="612341">
    <property type="type" value="gene"/>
</dbReference>
<dbReference type="neXtProt" id="NX_Q6P531"/>
<dbReference type="OpenTargets" id="ENSG00000167741"/>
<dbReference type="PharmGKB" id="PA142671739"/>
<dbReference type="VEuPathDB" id="HostDB:ENSG00000167741"/>
<dbReference type="eggNOG" id="KOG2410">
    <property type="taxonomic scope" value="Eukaryota"/>
</dbReference>
<dbReference type="GeneTree" id="ENSGT00940000161883"/>
<dbReference type="InParanoid" id="Q6P531"/>
<dbReference type="OrthoDB" id="1081007at2759"/>
<dbReference type="PAN-GO" id="Q6P531">
    <property type="GO annotations" value="0 GO annotations based on evolutionary models"/>
</dbReference>
<dbReference type="PhylomeDB" id="Q6P531"/>
<dbReference type="TreeFam" id="TF338758"/>
<dbReference type="PathwayCommons" id="Q6P531"/>
<dbReference type="Reactome" id="R-HSA-174403">
    <property type="pathway name" value="Glutathione synthesis and recycling"/>
</dbReference>
<dbReference type="Reactome" id="R-HSA-5423646">
    <property type="pathway name" value="Aflatoxin activation and detoxification"/>
</dbReference>
<dbReference type="Reactome" id="R-HSA-9753281">
    <property type="pathway name" value="Paracetamol ADME"/>
</dbReference>
<dbReference type="SignaLink" id="Q6P531"/>
<dbReference type="UniPathway" id="UPA00204"/>
<dbReference type="BioGRID-ORCS" id="124975">
    <property type="hits" value="18 hits in 1149 CRISPR screens"/>
</dbReference>
<dbReference type="GenomeRNAi" id="124975"/>
<dbReference type="Pharos" id="Q6P531">
    <property type="development level" value="Tbio"/>
</dbReference>
<dbReference type="PRO" id="PR:Q6P531"/>
<dbReference type="Proteomes" id="UP000005640">
    <property type="component" value="Chromosome 17"/>
</dbReference>
<dbReference type="RNAct" id="Q6P531">
    <property type="molecule type" value="protein"/>
</dbReference>
<dbReference type="Bgee" id="ENSG00000167741">
    <property type="expression patterns" value="Expressed in pancreatic ductal cell and 109 other cell types or tissues"/>
</dbReference>
<dbReference type="ExpressionAtlas" id="Q6P531">
    <property type="expression patterns" value="baseline and differential"/>
</dbReference>
<dbReference type="GO" id="GO:0070062">
    <property type="term" value="C:extracellular exosome"/>
    <property type="evidence" value="ECO:0007005"/>
    <property type="project" value="UniProtKB"/>
</dbReference>
<dbReference type="GO" id="GO:0016020">
    <property type="term" value="C:membrane"/>
    <property type="evidence" value="ECO:0007669"/>
    <property type="project" value="UniProtKB-SubCell"/>
</dbReference>
<dbReference type="GO" id="GO:0036374">
    <property type="term" value="F:glutathione hydrolase activity"/>
    <property type="evidence" value="ECO:0007669"/>
    <property type="project" value="UniProtKB-EC"/>
</dbReference>
<dbReference type="GO" id="GO:0103068">
    <property type="term" value="F:leukotriene C4 gamma-glutamyl transferase activity"/>
    <property type="evidence" value="ECO:0007669"/>
    <property type="project" value="UniProtKB-EC"/>
</dbReference>
<dbReference type="GO" id="GO:0006750">
    <property type="term" value="P:glutathione biosynthetic process"/>
    <property type="evidence" value="ECO:0007669"/>
    <property type="project" value="UniProtKB-KW"/>
</dbReference>
<dbReference type="GO" id="GO:1901750">
    <property type="term" value="P:leukotriene D4 biosynthetic process"/>
    <property type="evidence" value="ECO:0000250"/>
    <property type="project" value="UniProtKB"/>
</dbReference>
<dbReference type="Gene3D" id="3.60.20.40">
    <property type="match status" value="1"/>
</dbReference>
<dbReference type="InterPro" id="IPR052688">
    <property type="entry name" value="Gamma-glutamyltransfase"/>
</dbReference>
<dbReference type="InterPro" id="IPR043137">
    <property type="entry name" value="GGT_ssub"/>
</dbReference>
<dbReference type="InterPro" id="IPR029055">
    <property type="entry name" value="Ntn_hydrolases_N"/>
</dbReference>
<dbReference type="PANTHER" id="PTHR47278">
    <property type="entry name" value="GLUTATHIONE HYDROLASE 6"/>
    <property type="match status" value="1"/>
</dbReference>
<dbReference type="PANTHER" id="PTHR47278:SF1">
    <property type="entry name" value="GLUTATHIONE HYDROLASE 6"/>
    <property type="match status" value="1"/>
</dbReference>
<dbReference type="Pfam" id="PF01019">
    <property type="entry name" value="G_glu_transpept"/>
    <property type="match status" value="1"/>
</dbReference>
<dbReference type="PRINTS" id="PR01210">
    <property type="entry name" value="GGTRANSPTASE"/>
</dbReference>
<dbReference type="SUPFAM" id="SSF56235">
    <property type="entry name" value="N-terminal nucleophile aminohydrolases (Ntn hydrolases)"/>
    <property type="match status" value="1"/>
</dbReference>
<organism>
    <name type="scientific">Homo sapiens</name>
    <name type="common">Human</name>
    <dbReference type="NCBI Taxonomy" id="9606"/>
    <lineage>
        <taxon>Eukaryota</taxon>
        <taxon>Metazoa</taxon>
        <taxon>Chordata</taxon>
        <taxon>Craniata</taxon>
        <taxon>Vertebrata</taxon>
        <taxon>Euteleostomi</taxon>
        <taxon>Mammalia</taxon>
        <taxon>Eutheria</taxon>
        <taxon>Euarchontoglires</taxon>
        <taxon>Primates</taxon>
        <taxon>Haplorrhini</taxon>
        <taxon>Catarrhini</taxon>
        <taxon>Hominidae</taxon>
        <taxon>Homo</taxon>
    </lineage>
</organism>
<sequence length="493" mass="50509">MERAEEPVVYQKLLPWEPSLESEEEVEEEETSEALVLNPRRHQDSSRNKAGGLPGTWARVVAALLLLAVGCSLAVRQLQNQGRSTGSLGSVAPPPGGHSHGPGVYHHGAIISPAGRELLVAGGNVVDAGVGAALCLAVVHPHATGLGAMFWGLFHDSSSGNSTALTSGPAQTLAPGLGLPAALPTLHLLHARFGRLPWPRLLVGPTTLAQEGFLVDTPLARALVARGTEGLCPLLCHADGTPLGAGARATNPQLAAVLRSAALAPTSDLAGDALLSLLAGDLGVEVPSAVPRPTLEPAEQLPVPQGILFTTPSPSAGPELLALLEAALRSGAPIPDPCPPFLQTAVSPESSALAAVDSSGSVLLLTSSLNCSFGSAHLSPSTGVLLSNLVAKSTTSAWACPLILRGSLDDTEADVLGLVASGTPDVARAMTHTLLRHLAARPPTQAQHQHQGQQEPTEHPSTCGQGTLLQVAAHTEHAHVSSVPHACCPFQGF</sequence>
<reference key="1">
    <citation type="journal article" date="2004" name="Nat. Genet.">
        <title>Complete sequencing and characterization of 21,243 full-length human cDNAs.</title>
        <authorList>
            <person name="Ota T."/>
            <person name="Suzuki Y."/>
            <person name="Nishikawa T."/>
            <person name="Otsuki T."/>
            <person name="Sugiyama T."/>
            <person name="Irie R."/>
            <person name="Wakamatsu A."/>
            <person name="Hayashi K."/>
            <person name="Sato H."/>
            <person name="Nagai K."/>
            <person name="Kimura K."/>
            <person name="Makita H."/>
            <person name="Sekine M."/>
            <person name="Obayashi M."/>
            <person name="Nishi T."/>
            <person name="Shibahara T."/>
            <person name="Tanaka T."/>
            <person name="Ishii S."/>
            <person name="Yamamoto J."/>
            <person name="Saito K."/>
            <person name="Kawai Y."/>
            <person name="Isono Y."/>
            <person name="Nakamura Y."/>
            <person name="Nagahari K."/>
            <person name="Murakami K."/>
            <person name="Yasuda T."/>
            <person name="Iwayanagi T."/>
            <person name="Wagatsuma M."/>
            <person name="Shiratori A."/>
            <person name="Sudo H."/>
            <person name="Hosoiri T."/>
            <person name="Kaku Y."/>
            <person name="Kodaira H."/>
            <person name="Kondo H."/>
            <person name="Sugawara M."/>
            <person name="Takahashi M."/>
            <person name="Kanda K."/>
            <person name="Yokoi T."/>
            <person name="Furuya T."/>
            <person name="Kikkawa E."/>
            <person name="Omura Y."/>
            <person name="Abe K."/>
            <person name="Kamihara K."/>
            <person name="Katsuta N."/>
            <person name="Sato K."/>
            <person name="Tanikawa M."/>
            <person name="Yamazaki M."/>
            <person name="Ninomiya K."/>
            <person name="Ishibashi T."/>
            <person name="Yamashita H."/>
            <person name="Murakawa K."/>
            <person name="Fujimori K."/>
            <person name="Tanai H."/>
            <person name="Kimata M."/>
            <person name="Watanabe M."/>
            <person name="Hiraoka S."/>
            <person name="Chiba Y."/>
            <person name="Ishida S."/>
            <person name="Ono Y."/>
            <person name="Takiguchi S."/>
            <person name="Watanabe S."/>
            <person name="Yosida M."/>
            <person name="Hotuta T."/>
            <person name="Kusano J."/>
            <person name="Kanehori K."/>
            <person name="Takahashi-Fujii A."/>
            <person name="Hara H."/>
            <person name="Tanase T.-O."/>
            <person name="Nomura Y."/>
            <person name="Togiya S."/>
            <person name="Komai F."/>
            <person name="Hara R."/>
            <person name="Takeuchi K."/>
            <person name="Arita M."/>
            <person name="Imose N."/>
            <person name="Musashino K."/>
            <person name="Yuuki H."/>
            <person name="Oshima A."/>
            <person name="Sasaki N."/>
            <person name="Aotsuka S."/>
            <person name="Yoshikawa Y."/>
            <person name="Matsunawa H."/>
            <person name="Ichihara T."/>
            <person name="Shiohata N."/>
            <person name="Sano S."/>
            <person name="Moriya S."/>
            <person name="Momiyama H."/>
            <person name="Satoh N."/>
            <person name="Takami S."/>
            <person name="Terashima Y."/>
            <person name="Suzuki O."/>
            <person name="Nakagawa S."/>
            <person name="Senoh A."/>
            <person name="Mizoguchi H."/>
            <person name="Goto Y."/>
            <person name="Shimizu F."/>
            <person name="Wakebe H."/>
            <person name="Hishigaki H."/>
            <person name="Watanabe T."/>
            <person name="Sugiyama A."/>
            <person name="Takemoto M."/>
            <person name="Kawakami B."/>
            <person name="Yamazaki M."/>
            <person name="Watanabe K."/>
            <person name="Kumagai A."/>
            <person name="Itakura S."/>
            <person name="Fukuzumi Y."/>
            <person name="Fujimori Y."/>
            <person name="Komiyama M."/>
            <person name="Tashiro H."/>
            <person name="Tanigami A."/>
            <person name="Fujiwara T."/>
            <person name="Ono T."/>
            <person name="Yamada K."/>
            <person name="Fujii Y."/>
            <person name="Ozaki K."/>
            <person name="Hirao M."/>
            <person name="Ohmori Y."/>
            <person name="Kawabata A."/>
            <person name="Hikiji T."/>
            <person name="Kobatake N."/>
            <person name="Inagaki H."/>
            <person name="Ikema Y."/>
            <person name="Okamoto S."/>
            <person name="Okitani R."/>
            <person name="Kawakami T."/>
            <person name="Noguchi S."/>
            <person name="Itoh T."/>
            <person name="Shigeta K."/>
            <person name="Senba T."/>
            <person name="Matsumura K."/>
            <person name="Nakajima Y."/>
            <person name="Mizuno T."/>
            <person name="Morinaga M."/>
            <person name="Sasaki M."/>
            <person name="Togashi T."/>
            <person name="Oyama M."/>
            <person name="Hata H."/>
            <person name="Watanabe M."/>
            <person name="Komatsu T."/>
            <person name="Mizushima-Sugano J."/>
            <person name="Satoh T."/>
            <person name="Shirai Y."/>
            <person name="Takahashi Y."/>
            <person name="Nakagawa K."/>
            <person name="Okumura K."/>
            <person name="Nagase T."/>
            <person name="Nomura N."/>
            <person name="Kikuchi H."/>
            <person name="Masuho Y."/>
            <person name="Yamashita R."/>
            <person name="Nakai K."/>
            <person name="Yada T."/>
            <person name="Nakamura Y."/>
            <person name="Ohara O."/>
            <person name="Isogai T."/>
            <person name="Sugano S."/>
        </authorList>
    </citation>
    <scope>NUCLEOTIDE SEQUENCE [LARGE SCALE MRNA] (ISOFORMS 1 AND 2)</scope>
    <scope>VARIANTS TRP-40 AND VAL-58</scope>
    <source>
        <tissue>Mammary gland</tissue>
        <tissue>Rectum</tissue>
    </source>
</reference>
<reference key="2">
    <citation type="submission" date="2005-09" db="EMBL/GenBank/DDBJ databases">
        <authorList>
            <person name="Mural R.J."/>
            <person name="Istrail S."/>
            <person name="Sutton G.G."/>
            <person name="Florea L."/>
            <person name="Halpern A.L."/>
            <person name="Mobarry C.M."/>
            <person name="Lippert R."/>
            <person name="Walenz B."/>
            <person name="Shatkay H."/>
            <person name="Dew I."/>
            <person name="Miller J.R."/>
            <person name="Flanigan M.J."/>
            <person name="Edwards N.J."/>
            <person name="Bolanos R."/>
            <person name="Fasulo D."/>
            <person name="Halldorsson B.V."/>
            <person name="Hannenhalli S."/>
            <person name="Turner R."/>
            <person name="Yooseph S."/>
            <person name="Lu F."/>
            <person name="Nusskern D.R."/>
            <person name="Shue B.C."/>
            <person name="Zheng X.H."/>
            <person name="Zhong F."/>
            <person name="Delcher A.L."/>
            <person name="Huson D.H."/>
            <person name="Kravitz S.A."/>
            <person name="Mouchard L."/>
            <person name="Reinert K."/>
            <person name="Remington K.A."/>
            <person name="Clark A.G."/>
            <person name="Waterman M.S."/>
            <person name="Eichler E.E."/>
            <person name="Adams M.D."/>
            <person name="Hunkapiller M.W."/>
            <person name="Myers E.W."/>
            <person name="Venter J.C."/>
        </authorList>
    </citation>
    <scope>NUCLEOTIDE SEQUENCE [LARGE SCALE GENOMIC DNA]</scope>
    <scope>VARIANT VAL-58</scope>
</reference>
<reference key="3">
    <citation type="journal article" date="2004" name="Genome Res.">
        <title>The status, quality, and expansion of the NIH full-length cDNA project: the Mammalian Gene Collection (MGC).</title>
        <authorList>
            <consortium name="The MGC Project Team"/>
        </authorList>
    </citation>
    <scope>NUCLEOTIDE SEQUENCE [LARGE SCALE MRNA] (ISOFORM 1)</scope>
    <scope>VARIANT VAL-58</scope>
    <source>
        <tissue>Kidney</tissue>
    </source>
</reference>
<reference key="4">
    <citation type="journal article" date="2008" name="Hum. Genet.">
        <title>The human gamma-glutamyltransferase gene family.</title>
        <authorList>
            <person name="Heisterkamp N."/>
            <person name="Groffen J."/>
            <person name="Warburton D."/>
            <person name="Sneddon T.P."/>
        </authorList>
    </citation>
    <scope>NOMENCLATURE</scope>
</reference>
<proteinExistence type="evidence at protein level"/>
<comment type="function">
    <text evidence="2">Hydrolyzes and transfers gamma-glutamyl moieties from glutathione and other gamma-glutamyl compounds to acceptors.</text>
</comment>
<comment type="catalytic activity">
    <reaction evidence="2">
        <text>an N-terminal (5-L-glutamyl)-[peptide] + an alpha-amino acid = 5-L-glutamyl amino acid + an N-terminal L-alpha-aminoacyl-[peptide]</text>
        <dbReference type="Rhea" id="RHEA:23904"/>
        <dbReference type="Rhea" id="RHEA-COMP:9780"/>
        <dbReference type="Rhea" id="RHEA-COMP:9795"/>
        <dbReference type="ChEBI" id="CHEBI:77644"/>
        <dbReference type="ChEBI" id="CHEBI:78597"/>
        <dbReference type="ChEBI" id="CHEBI:78599"/>
        <dbReference type="ChEBI" id="CHEBI:78608"/>
        <dbReference type="EC" id="2.3.2.2"/>
    </reaction>
    <physiologicalReaction direction="left-to-right" evidence="2">
        <dbReference type="Rhea" id="RHEA:23905"/>
    </physiologicalReaction>
</comment>
<comment type="catalytic activity">
    <reaction evidence="2">
        <text>glutathione + H2O = L-cysteinylglycine + L-glutamate</text>
        <dbReference type="Rhea" id="RHEA:28807"/>
        <dbReference type="ChEBI" id="CHEBI:15377"/>
        <dbReference type="ChEBI" id="CHEBI:29985"/>
        <dbReference type="ChEBI" id="CHEBI:57925"/>
        <dbReference type="ChEBI" id="CHEBI:61694"/>
        <dbReference type="EC" id="3.4.19.13"/>
    </reaction>
    <physiologicalReaction direction="left-to-right" evidence="2">
        <dbReference type="Rhea" id="RHEA:28808"/>
    </physiologicalReaction>
</comment>
<comment type="catalytic activity">
    <reaction evidence="2">
        <text>an S-substituted glutathione + H2O = an S-substituted L-cysteinylglycine + L-glutamate</text>
        <dbReference type="Rhea" id="RHEA:59468"/>
        <dbReference type="ChEBI" id="CHEBI:15377"/>
        <dbReference type="ChEBI" id="CHEBI:29985"/>
        <dbReference type="ChEBI" id="CHEBI:90779"/>
        <dbReference type="ChEBI" id="CHEBI:143103"/>
        <dbReference type="EC" id="3.4.19.13"/>
    </reaction>
    <physiologicalReaction direction="left-to-right" evidence="2">
        <dbReference type="Rhea" id="RHEA:59469"/>
    </physiologicalReaction>
</comment>
<comment type="pathway">
    <text evidence="2">Sulfur metabolism; glutathione metabolism.</text>
</comment>
<comment type="subunit">
    <text evidence="2">Heterodimer composed of the light and heavy chains. The active site is located in the light chain.</text>
</comment>
<comment type="interaction">
    <interactant intactId="EBI-2868927">
        <id>Q6P531</id>
    </interactant>
    <interactant intactId="EBI-10225815">
        <id>Q08AM2</id>
        <label>ADAM33</label>
    </interactant>
    <organismsDiffer>false</organismsDiffer>
    <experiments>3</experiments>
</comment>
<comment type="interaction">
    <interactant intactId="EBI-2868927">
        <id>Q6P531</id>
    </interactant>
    <interactant intactId="EBI-3922513">
        <id>O95393</id>
        <label>BMP10</label>
    </interactant>
    <organismsDiffer>false</organismsDiffer>
    <experiments>3</experiments>
</comment>
<comment type="interaction">
    <interactant intactId="EBI-2868927">
        <id>Q6P531</id>
    </interactant>
    <interactant intactId="EBI-12279764">
        <id>O75355-2</id>
        <label>ENTPD3</label>
    </interactant>
    <organismsDiffer>false</organismsDiffer>
    <experiments>3</experiments>
</comment>
<comment type="interaction">
    <interactant intactId="EBI-2868927">
        <id>Q6P531</id>
    </interactant>
    <interactant intactId="EBI-9056723">
        <id>Q9BWQ8</id>
        <label>FAIM2</label>
    </interactant>
    <organismsDiffer>false</organismsDiffer>
    <experiments>3</experiments>
</comment>
<comment type="interaction">
    <interactant intactId="EBI-2868927">
        <id>Q6P531</id>
    </interactant>
    <interactant intactId="EBI-2876774">
        <id>Q92520</id>
        <label>FAM3C</label>
    </interactant>
    <organismsDiffer>false</organismsDiffer>
    <experiments>3</experiments>
</comment>
<comment type="interaction">
    <interactant intactId="EBI-2868927">
        <id>Q6P531</id>
    </interactant>
    <interactant intactId="EBI-2832909">
        <id>Q7Z429</id>
        <label>GRINA</label>
    </interactant>
    <organismsDiffer>false</organismsDiffer>
    <experiments>3</experiments>
</comment>
<comment type="interaction">
    <interactant intactId="EBI-2868927">
        <id>Q6P531</id>
    </interactant>
    <interactant intactId="EBI-8652744">
        <id>Q96IW7</id>
        <label>SEC22A</label>
    </interactant>
    <organismsDiffer>false</organismsDiffer>
    <experiments>3</experiments>
</comment>
<comment type="interaction">
    <interactant intactId="EBI-2868927">
        <id>Q6P531</id>
    </interactant>
    <interactant intactId="EBI-2820569">
        <id>Q969X1</id>
        <label>TMBIM1</label>
    </interactant>
    <organismsDiffer>false</organismsDiffer>
    <experiments>3</experiments>
</comment>
<comment type="interaction">
    <interactant intactId="EBI-2868927">
        <id>Q6P531</id>
    </interactant>
    <interactant intactId="EBI-12003398">
        <id>Q9H2S6-2</id>
        <label>TNMD</label>
    </interactant>
    <organismsDiffer>false</organismsDiffer>
    <experiments>3</experiments>
</comment>
<comment type="subcellular location">
    <subcellularLocation>
        <location evidence="2">Membrane</location>
        <topology evidence="1">Single-pass type II membrane protein</topology>
    </subcellularLocation>
</comment>
<comment type="alternative products">
    <event type="alternative splicing"/>
    <isoform>
        <id>Q6P531-1</id>
        <name>1</name>
        <sequence type="displayed"/>
    </isoform>
    <isoform>
        <id>Q6P531-2</id>
        <name>2</name>
        <sequence type="described" ref="VSP_030451"/>
    </isoform>
</comment>
<comment type="PTM">
    <text evidence="2">Cleaved by autocatalysis into a large and a small subunit and the autocatalytic cleavage is essential to the functional activation of the enzyme.</text>
</comment>
<comment type="similarity">
    <text evidence="10">Belongs to the gamma-glutamyltransferase family.</text>
</comment>
<name>GGT6_HUMAN</name>
<gene>
    <name evidence="11" type="primary">GGT6</name>
</gene>
<protein>
    <recommendedName>
        <fullName evidence="9">Glutathione hydrolase 6</fullName>
        <ecNumber evidence="2">3.4.19.13</ecNumber>
    </recommendedName>
    <alternativeName>
        <fullName>Gamma-glutamyltransferase 6</fullName>
        <shortName>GGT 6</shortName>
        <ecNumber evidence="2">2.3.2.2</ecNumber>
    </alternativeName>
    <alternativeName>
        <fullName>Gamma-glutamyltranspeptidase 6</fullName>
    </alternativeName>
    <component>
        <recommendedName>
            <fullName>Glutathione hydrolase 6 heavy chain</fullName>
        </recommendedName>
    </component>
    <component>
        <recommendedName>
            <fullName>Glutathione hydrolase 6 light chain</fullName>
        </recommendedName>
    </component>
</protein>